<gene>
    <name evidence="1" type="primary">rnpA</name>
    <name type="ordered locus">MCCL_1957</name>
</gene>
<sequence>MEKAYRIKKNEDFQKIYKNGKSVANRQFIIYRQKNSENEHFRLGISVSKKIGNAVTRNRIKRAIRESFTKHKEDIIKDDFIVIARQPSKEMTTNEINKSLEHVMKIAKGFNKRIT</sequence>
<comment type="function">
    <text evidence="1">RNaseP catalyzes the removal of the 5'-leader sequence from pre-tRNA to produce the mature 5'-terminus. It can also cleave other RNA substrates such as 4.5S RNA. The protein component plays an auxiliary but essential role in vivo by binding to the 5'-leader sequence and broadening the substrate specificity of the ribozyme.</text>
</comment>
<comment type="catalytic activity">
    <reaction evidence="1">
        <text>Endonucleolytic cleavage of RNA, removing 5'-extranucleotides from tRNA precursor.</text>
        <dbReference type="EC" id="3.1.26.5"/>
    </reaction>
</comment>
<comment type="subunit">
    <text evidence="1">Consists of a catalytic RNA component (M1 or rnpB) and a protein subunit.</text>
</comment>
<comment type="similarity">
    <text evidence="1">Belongs to the RnpA family.</text>
</comment>
<feature type="chain" id="PRO_1000194648" description="Ribonuclease P protein component">
    <location>
        <begin position="1"/>
        <end position="115"/>
    </location>
</feature>
<protein>
    <recommendedName>
        <fullName evidence="1">Ribonuclease P protein component</fullName>
        <shortName evidence="1">RNase P protein</shortName>
        <shortName evidence="1">RNaseP protein</shortName>
        <ecNumber evidence="1">3.1.26.5</ecNumber>
    </recommendedName>
    <alternativeName>
        <fullName evidence="1">Protein C5</fullName>
    </alternativeName>
</protein>
<proteinExistence type="inferred from homology"/>
<keyword id="KW-0255">Endonuclease</keyword>
<keyword id="KW-0378">Hydrolase</keyword>
<keyword id="KW-0540">Nuclease</keyword>
<keyword id="KW-1185">Reference proteome</keyword>
<keyword id="KW-0694">RNA-binding</keyword>
<keyword id="KW-0819">tRNA processing</keyword>
<organism>
    <name type="scientific">Macrococcus caseolyticus (strain JCSC5402)</name>
    <name type="common">Macrococcoides caseolyticum</name>
    <dbReference type="NCBI Taxonomy" id="458233"/>
    <lineage>
        <taxon>Bacteria</taxon>
        <taxon>Bacillati</taxon>
        <taxon>Bacillota</taxon>
        <taxon>Bacilli</taxon>
        <taxon>Bacillales</taxon>
        <taxon>Staphylococcaceae</taxon>
        <taxon>Macrococcoides</taxon>
    </lineage>
</organism>
<name>RNPA_MACCJ</name>
<accession>B9E8Z6</accession>
<reference key="1">
    <citation type="journal article" date="2009" name="J. Bacteriol.">
        <title>Complete genome sequence of Macrococcus caseolyticus strain JCSCS5402, reflecting the ancestral genome of the human-pathogenic staphylococci.</title>
        <authorList>
            <person name="Baba T."/>
            <person name="Kuwahara-Arai K."/>
            <person name="Uchiyama I."/>
            <person name="Takeuchi F."/>
            <person name="Ito T."/>
            <person name="Hiramatsu K."/>
        </authorList>
    </citation>
    <scope>NUCLEOTIDE SEQUENCE [LARGE SCALE GENOMIC DNA]</scope>
    <source>
        <strain>JCSC5402</strain>
    </source>
</reference>
<evidence type="ECO:0000255" key="1">
    <source>
        <dbReference type="HAMAP-Rule" id="MF_00227"/>
    </source>
</evidence>
<dbReference type="EC" id="3.1.26.5" evidence="1"/>
<dbReference type="EMBL" id="AP009484">
    <property type="protein sequence ID" value="BAH18664.1"/>
    <property type="molecule type" value="Genomic_DNA"/>
</dbReference>
<dbReference type="RefSeq" id="WP_015912456.1">
    <property type="nucleotide sequence ID" value="NC_011999.1"/>
</dbReference>
<dbReference type="SMR" id="B9E8Z6"/>
<dbReference type="STRING" id="458233.MCCL_1957"/>
<dbReference type="GeneID" id="61130370"/>
<dbReference type="KEGG" id="mcl:MCCL_1957"/>
<dbReference type="eggNOG" id="COG0594">
    <property type="taxonomic scope" value="Bacteria"/>
</dbReference>
<dbReference type="HOGENOM" id="CLU_117179_9_1_9"/>
<dbReference type="OrthoDB" id="9810867at2"/>
<dbReference type="Proteomes" id="UP000001383">
    <property type="component" value="Chromosome"/>
</dbReference>
<dbReference type="GO" id="GO:0030677">
    <property type="term" value="C:ribonuclease P complex"/>
    <property type="evidence" value="ECO:0007669"/>
    <property type="project" value="TreeGrafter"/>
</dbReference>
<dbReference type="GO" id="GO:0042781">
    <property type="term" value="F:3'-tRNA processing endoribonuclease activity"/>
    <property type="evidence" value="ECO:0007669"/>
    <property type="project" value="TreeGrafter"/>
</dbReference>
<dbReference type="GO" id="GO:0004526">
    <property type="term" value="F:ribonuclease P activity"/>
    <property type="evidence" value="ECO:0007669"/>
    <property type="project" value="UniProtKB-UniRule"/>
</dbReference>
<dbReference type="GO" id="GO:0000049">
    <property type="term" value="F:tRNA binding"/>
    <property type="evidence" value="ECO:0007669"/>
    <property type="project" value="UniProtKB-UniRule"/>
</dbReference>
<dbReference type="GO" id="GO:0001682">
    <property type="term" value="P:tRNA 5'-leader removal"/>
    <property type="evidence" value="ECO:0007669"/>
    <property type="project" value="UniProtKB-UniRule"/>
</dbReference>
<dbReference type="FunFam" id="3.30.230.10:FF:000021">
    <property type="entry name" value="Ribonuclease P protein component"/>
    <property type="match status" value="1"/>
</dbReference>
<dbReference type="Gene3D" id="3.30.230.10">
    <property type="match status" value="1"/>
</dbReference>
<dbReference type="HAMAP" id="MF_00227">
    <property type="entry name" value="RNase_P"/>
    <property type="match status" value="1"/>
</dbReference>
<dbReference type="InterPro" id="IPR020568">
    <property type="entry name" value="Ribosomal_Su5_D2-typ_SF"/>
</dbReference>
<dbReference type="InterPro" id="IPR014721">
    <property type="entry name" value="Ribsml_uS5_D2-typ_fold_subgr"/>
</dbReference>
<dbReference type="InterPro" id="IPR000100">
    <property type="entry name" value="RNase_P"/>
</dbReference>
<dbReference type="InterPro" id="IPR020539">
    <property type="entry name" value="RNase_P_CS"/>
</dbReference>
<dbReference type="NCBIfam" id="TIGR00188">
    <property type="entry name" value="rnpA"/>
    <property type="match status" value="1"/>
</dbReference>
<dbReference type="PANTHER" id="PTHR33992">
    <property type="entry name" value="RIBONUCLEASE P PROTEIN COMPONENT"/>
    <property type="match status" value="1"/>
</dbReference>
<dbReference type="PANTHER" id="PTHR33992:SF1">
    <property type="entry name" value="RIBONUCLEASE P PROTEIN COMPONENT"/>
    <property type="match status" value="1"/>
</dbReference>
<dbReference type="Pfam" id="PF00825">
    <property type="entry name" value="Ribonuclease_P"/>
    <property type="match status" value="1"/>
</dbReference>
<dbReference type="SUPFAM" id="SSF54211">
    <property type="entry name" value="Ribosomal protein S5 domain 2-like"/>
    <property type="match status" value="1"/>
</dbReference>
<dbReference type="PROSITE" id="PS00648">
    <property type="entry name" value="RIBONUCLEASE_P"/>
    <property type="match status" value="1"/>
</dbReference>